<sequence length="295" mass="32660">MTHLFEGVGVALTTPFTNNKVNLEALKAHVNFLLENNAQAIIVNGTTAESPTLTTDEKERILKTVIDLVDKRVPVIAGTGTNDTEKSIQASFQAKALGADAIMLITPYYNKTNQRGLVKHFEAITDAVKLPVVLYNVPSRTNMTIEPETVEILSQHPYIVALKDATNDFEYLEEVKKRIDTNSFALYSGNDDNVVEYYQRGGQGVISVIANVIPKEFQALYDAQQSGLDIQDQFKPIGTLLSALSVDINPIPIKALTSYLEFGNYELRLPLVSLEDTDTKVLREAYDTFKAGENE</sequence>
<comment type="function">
    <text evidence="1">Catalyzes the condensation of (S)-aspartate-beta-semialdehyde [(S)-ASA] and pyruvate to 4-hydroxy-tetrahydrodipicolinate (HTPA).</text>
</comment>
<comment type="catalytic activity">
    <reaction evidence="1">
        <text>L-aspartate 4-semialdehyde + pyruvate = (2S,4S)-4-hydroxy-2,3,4,5-tetrahydrodipicolinate + H2O + H(+)</text>
        <dbReference type="Rhea" id="RHEA:34171"/>
        <dbReference type="ChEBI" id="CHEBI:15361"/>
        <dbReference type="ChEBI" id="CHEBI:15377"/>
        <dbReference type="ChEBI" id="CHEBI:15378"/>
        <dbReference type="ChEBI" id="CHEBI:67139"/>
        <dbReference type="ChEBI" id="CHEBI:537519"/>
        <dbReference type="EC" id="4.3.3.7"/>
    </reaction>
</comment>
<comment type="pathway">
    <text evidence="1">Amino-acid biosynthesis; L-lysine biosynthesis via DAP pathway; (S)-tetrahydrodipicolinate from L-aspartate: step 3/4.</text>
</comment>
<comment type="subunit">
    <text evidence="1">Homodimer.</text>
</comment>
<comment type="subcellular location">
    <subcellularLocation>
        <location evidence="1">Cytoplasm</location>
    </subcellularLocation>
</comment>
<comment type="similarity">
    <text evidence="1">Belongs to the DapA family.</text>
</comment>
<comment type="caution">
    <text evidence="2">Was originally thought to be a dihydrodipicolinate synthase (DHDPS), catalyzing the condensation of (S)-aspartate-beta-semialdehyde [(S)-ASA] and pyruvate to dihydrodipicolinate (DHDP). However, it was shown in E.coli that the product of the enzymatic reaction is not dihydrodipicolinate but in fact (4S)-4-hydroxy-2,3,4,5-tetrahydro-(2S)-dipicolinic acid (HTPA), and that the consecutive dehydration reaction leading to DHDP is not spontaneous but catalyzed by DapB.</text>
</comment>
<evidence type="ECO:0000255" key="1">
    <source>
        <dbReference type="HAMAP-Rule" id="MF_00418"/>
    </source>
</evidence>
<evidence type="ECO:0000305" key="2"/>
<proteinExistence type="inferred from homology"/>
<name>DAPA_STAA2</name>
<keyword id="KW-0028">Amino-acid biosynthesis</keyword>
<keyword id="KW-0963">Cytoplasm</keyword>
<keyword id="KW-0220">Diaminopimelate biosynthesis</keyword>
<keyword id="KW-0456">Lyase</keyword>
<keyword id="KW-0457">Lysine biosynthesis</keyword>
<keyword id="KW-0704">Schiff base</keyword>
<gene>
    <name evidence="1" type="primary">dapA</name>
    <name type="ordered locus">SaurJH1_1485</name>
</gene>
<dbReference type="EC" id="4.3.3.7" evidence="1"/>
<dbReference type="EMBL" id="CP000736">
    <property type="protein sequence ID" value="ABR52334.1"/>
    <property type="molecule type" value="Genomic_DNA"/>
</dbReference>
<dbReference type="SMR" id="A6U1L6"/>
<dbReference type="KEGG" id="sah:SaurJH1_1485"/>
<dbReference type="HOGENOM" id="CLU_049343_7_0_9"/>
<dbReference type="UniPathway" id="UPA00034">
    <property type="reaction ID" value="UER00017"/>
</dbReference>
<dbReference type="GO" id="GO:0005829">
    <property type="term" value="C:cytosol"/>
    <property type="evidence" value="ECO:0007669"/>
    <property type="project" value="TreeGrafter"/>
</dbReference>
<dbReference type="GO" id="GO:0008840">
    <property type="term" value="F:4-hydroxy-tetrahydrodipicolinate synthase activity"/>
    <property type="evidence" value="ECO:0007669"/>
    <property type="project" value="UniProtKB-UniRule"/>
</dbReference>
<dbReference type="GO" id="GO:0019877">
    <property type="term" value="P:diaminopimelate biosynthetic process"/>
    <property type="evidence" value="ECO:0007669"/>
    <property type="project" value="UniProtKB-UniRule"/>
</dbReference>
<dbReference type="GO" id="GO:0009089">
    <property type="term" value="P:lysine biosynthetic process via diaminopimelate"/>
    <property type="evidence" value="ECO:0007669"/>
    <property type="project" value="UniProtKB-UniRule"/>
</dbReference>
<dbReference type="CDD" id="cd00950">
    <property type="entry name" value="DHDPS"/>
    <property type="match status" value="1"/>
</dbReference>
<dbReference type="Gene3D" id="3.20.20.70">
    <property type="entry name" value="Aldolase class I"/>
    <property type="match status" value="1"/>
</dbReference>
<dbReference type="HAMAP" id="MF_00418">
    <property type="entry name" value="DapA"/>
    <property type="match status" value="1"/>
</dbReference>
<dbReference type="InterPro" id="IPR013785">
    <property type="entry name" value="Aldolase_TIM"/>
</dbReference>
<dbReference type="InterPro" id="IPR005263">
    <property type="entry name" value="DapA"/>
</dbReference>
<dbReference type="InterPro" id="IPR002220">
    <property type="entry name" value="DapA-like"/>
</dbReference>
<dbReference type="InterPro" id="IPR020625">
    <property type="entry name" value="Schiff_base-form_aldolases_AS"/>
</dbReference>
<dbReference type="NCBIfam" id="TIGR00674">
    <property type="entry name" value="dapA"/>
    <property type="match status" value="1"/>
</dbReference>
<dbReference type="PANTHER" id="PTHR12128:SF66">
    <property type="entry name" value="4-HYDROXY-2-OXOGLUTARATE ALDOLASE, MITOCHONDRIAL"/>
    <property type="match status" value="1"/>
</dbReference>
<dbReference type="PANTHER" id="PTHR12128">
    <property type="entry name" value="DIHYDRODIPICOLINATE SYNTHASE"/>
    <property type="match status" value="1"/>
</dbReference>
<dbReference type="Pfam" id="PF00701">
    <property type="entry name" value="DHDPS"/>
    <property type="match status" value="1"/>
</dbReference>
<dbReference type="PIRSF" id="PIRSF001365">
    <property type="entry name" value="DHDPS"/>
    <property type="match status" value="1"/>
</dbReference>
<dbReference type="PRINTS" id="PR00146">
    <property type="entry name" value="DHPICSNTHASE"/>
</dbReference>
<dbReference type="SMART" id="SM01130">
    <property type="entry name" value="DHDPS"/>
    <property type="match status" value="1"/>
</dbReference>
<dbReference type="SUPFAM" id="SSF51569">
    <property type="entry name" value="Aldolase"/>
    <property type="match status" value="1"/>
</dbReference>
<dbReference type="PROSITE" id="PS00666">
    <property type="entry name" value="DHDPS_2"/>
    <property type="match status" value="1"/>
</dbReference>
<feature type="chain" id="PRO_1000080541" description="4-hydroxy-tetrahydrodipicolinate synthase">
    <location>
        <begin position="1"/>
        <end position="295"/>
    </location>
</feature>
<feature type="active site" description="Proton donor/acceptor" evidence="1">
    <location>
        <position position="135"/>
    </location>
</feature>
<feature type="active site" description="Schiff-base intermediate with substrate" evidence="1">
    <location>
        <position position="163"/>
    </location>
</feature>
<feature type="binding site" evidence="1">
    <location>
        <position position="47"/>
    </location>
    <ligand>
        <name>pyruvate</name>
        <dbReference type="ChEBI" id="CHEBI:15361"/>
    </ligand>
</feature>
<feature type="binding site" evidence="1">
    <location>
        <position position="206"/>
    </location>
    <ligand>
        <name>pyruvate</name>
        <dbReference type="ChEBI" id="CHEBI:15361"/>
    </ligand>
</feature>
<feature type="site" description="Part of a proton relay during catalysis" evidence="1">
    <location>
        <position position="46"/>
    </location>
</feature>
<feature type="site" description="Part of a proton relay during catalysis" evidence="1">
    <location>
        <position position="109"/>
    </location>
</feature>
<reference key="1">
    <citation type="submission" date="2007-06" db="EMBL/GenBank/DDBJ databases">
        <title>Complete sequence of chromosome of Staphylococcus aureus subsp. aureus JH1.</title>
        <authorList>
            <consortium name="US DOE Joint Genome Institute"/>
            <person name="Copeland A."/>
            <person name="Lucas S."/>
            <person name="Lapidus A."/>
            <person name="Barry K."/>
            <person name="Detter J.C."/>
            <person name="Glavina del Rio T."/>
            <person name="Hammon N."/>
            <person name="Israni S."/>
            <person name="Dalin E."/>
            <person name="Tice H."/>
            <person name="Pitluck S."/>
            <person name="Chain P."/>
            <person name="Malfatti S."/>
            <person name="Shin M."/>
            <person name="Vergez L."/>
            <person name="Schmutz J."/>
            <person name="Larimer F."/>
            <person name="Land M."/>
            <person name="Hauser L."/>
            <person name="Kyrpides N."/>
            <person name="Ivanova N."/>
            <person name="Tomasz A."/>
            <person name="Richardson P."/>
        </authorList>
    </citation>
    <scope>NUCLEOTIDE SEQUENCE [LARGE SCALE GENOMIC DNA]</scope>
    <source>
        <strain>JH1</strain>
    </source>
</reference>
<organism>
    <name type="scientific">Staphylococcus aureus (strain JH1)</name>
    <dbReference type="NCBI Taxonomy" id="359787"/>
    <lineage>
        <taxon>Bacteria</taxon>
        <taxon>Bacillati</taxon>
        <taxon>Bacillota</taxon>
        <taxon>Bacilli</taxon>
        <taxon>Bacillales</taxon>
        <taxon>Staphylococcaceae</taxon>
        <taxon>Staphylococcus</taxon>
    </lineage>
</organism>
<accession>A6U1L6</accession>
<protein>
    <recommendedName>
        <fullName evidence="1">4-hydroxy-tetrahydrodipicolinate synthase</fullName>
        <shortName evidence="1">HTPA synthase</shortName>
        <ecNumber evidence="1">4.3.3.7</ecNumber>
    </recommendedName>
</protein>